<organism>
    <name type="scientific">Homo sapiens</name>
    <name type="common">Human</name>
    <dbReference type="NCBI Taxonomy" id="9606"/>
    <lineage>
        <taxon>Eukaryota</taxon>
        <taxon>Metazoa</taxon>
        <taxon>Chordata</taxon>
        <taxon>Craniata</taxon>
        <taxon>Vertebrata</taxon>
        <taxon>Euteleostomi</taxon>
        <taxon>Mammalia</taxon>
        <taxon>Eutheria</taxon>
        <taxon>Euarchontoglires</taxon>
        <taxon>Primates</taxon>
        <taxon>Haplorrhini</taxon>
        <taxon>Catarrhini</taxon>
        <taxon>Hominidae</taxon>
        <taxon>Homo</taxon>
    </lineage>
</organism>
<sequence length="309" mass="34404">MTLRNSSSVTEFILVGLSEQPELQLPLFLLFLGIYVFTVVGNLGLITLIGINPSLHTPMYFFLFNLSFIDLCYSCVFTPKMLNDFVSESIISYVGCMTQLFFFCFFVNSECYVLVSMAYDRYVAICNPLLYMVTMSPRVCFLLMFGSYVVGFAGAMAHTGSMLRLTFCDSNVIDHYLCDVLPLLQLSCTSTHVSELVFFIVVGVITMLSSISIVISYALILSNILCIPSAEGRSKAFSTWGSHIIAVALFFGSGTFTYLTTSFPGSMNHGRFASVFYTNVVPMLNPSIYSLRNKDDKLALGKTLKRVLF</sequence>
<gene>
    <name type="primary">OR8B4</name>
    <name type="synonym">OR8B4P</name>
</gene>
<comment type="function">
    <text evidence="4">Odorant receptor.</text>
</comment>
<comment type="subcellular location">
    <subcellularLocation>
        <location>Cell membrane</location>
        <topology>Multi-pass membrane protein</topology>
    </subcellularLocation>
</comment>
<comment type="similarity">
    <text evidence="2">Belongs to the G-protein coupled receptor 1 family.</text>
</comment>
<comment type="online information" name="Human Olfactory Receptor Data Exploratorium (HORDE)">
    <link uri="http://genome.weizmann.ac.il/horde/card/index/symbol:OR8B4"/>
</comment>
<name>OR8B4_HUMAN</name>
<dbReference type="EMBL" id="AB065831">
    <property type="protein sequence ID" value="BAC06050.1"/>
    <property type="molecule type" value="Genomic_DNA"/>
</dbReference>
<dbReference type="EMBL" id="CH471065">
    <property type="protein sequence ID" value="EAW67582.1"/>
    <property type="molecule type" value="Genomic_DNA"/>
</dbReference>
<dbReference type="EMBL" id="BC136865">
    <property type="protein sequence ID" value="AAI36866.1"/>
    <property type="molecule type" value="mRNA"/>
</dbReference>
<dbReference type="EMBL" id="BC136866">
    <property type="protein sequence ID" value="AAI36867.1"/>
    <property type="molecule type" value="mRNA"/>
</dbReference>
<dbReference type="EMBL" id="AF399509">
    <property type="protein sequence ID" value="AAK94994.1"/>
    <property type="molecule type" value="Genomic_DNA"/>
</dbReference>
<dbReference type="EMBL" id="BK004205">
    <property type="protein sequence ID" value="DAA04603.1"/>
    <property type="molecule type" value="Genomic_DNA"/>
</dbReference>
<dbReference type="CCDS" id="CCDS31710.1"/>
<dbReference type="RefSeq" id="NP_001005196.1">
    <property type="nucleotide sequence ID" value="NM_001005196.1"/>
</dbReference>
<dbReference type="SMR" id="Q96RC9"/>
<dbReference type="FunCoup" id="Q96RC9">
    <property type="interactions" value="416"/>
</dbReference>
<dbReference type="STRING" id="9606.ENSP00000348449"/>
<dbReference type="GlyCosmos" id="Q96RC9">
    <property type="glycosylation" value="1 site, No reported glycans"/>
</dbReference>
<dbReference type="GlyGen" id="Q96RC9">
    <property type="glycosylation" value="1 site"/>
</dbReference>
<dbReference type="BioMuta" id="OR8B4"/>
<dbReference type="DMDM" id="20532194"/>
<dbReference type="PaxDb" id="9606-ENSP00000485212"/>
<dbReference type="Antibodypedia" id="78417">
    <property type="antibodies" value="114 antibodies from 23 providers"/>
</dbReference>
<dbReference type="DNASU" id="283162"/>
<dbReference type="Ensembl" id="ENST00000356130.7">
    <property type="protein sequence ID" value="ENSP00000348449.3"/>
    <property type="gene ID" value="ENSG00000280090.3"/>
</dbReference>
<dbReference type="GeneID" id="283162"/>
<dbReference type="KEGG" id="hsa:283162"/>
<dbReference type="MANE-Select" id="ENST00000356130.7">
    <property type="protein sequence ID" value="ENSP00000348449.3"/>
    <property type="RefSeq nucleotide sequence ID" value="NM_001005196.1"/>
    <property type="RefSeq protein sequence ID" value="NP_001005196.1"/>
</dbReference>
<dbReference type="UCSC" id="uc010sak.2">
    <property type="organism name" value="human"/>
</dbReference>
<dbReference type="AGR" id="HGNC:8473"/>
<dbReference type="CTD" id="283162"/>
<dbReference type="GeneCards" id="OR8B4"/>
<dbReference type="HGNC" id="HGNC:8473">
    <property type="gene designation" value="OR8B4"/>
</dbReference>
<dbReference type="HPA" id="ENSG00000280090">
    <property type="expression patterns" value="Not detected"/>
</dbReference>
<dbReference type="neXtProt" id="NX_Q96RC9"/>
<dbReference type="PharmGKB" id="PA32752"/>
<dbReference type="VEuPathDB" id="HostDB:ENSG00000280090"/>
<dbReference type="eggNOG" id="ENOG502RU0N">
    <property type="taxonomic scope" value="Eukaryota"/>
</dbReference>
<dbReference type="GeneTree" id="ENSGT01010000222320"/>
<dbReference type="HOGENOM" id="CLU_012526_1_0_1"/>
<dbReference type="InParanoid" id="Q96RC9"/>
<dbReference type="OMA" id="MDQGKFA"/>
<dbReference type="OrthoDB" id="9832556at2759"/>
<dbReference type="PAN-GO" id="Q96RC9">
    <property type="GO annotations" value="4 GO annotations based on evolutionary models"/>
</dbReference>
<dbReference type="PhylomeDB" id="Q96RC9"/>
<dbReference type="TreeFam" id="TF352753"/>
<dbReference type="PathwayCommons" id="Q96RC9"/>
<dbReference type="Reactome" id="R-HSA-9752946">
    <property type="pathway name" value="Expression and translocation of olfactory receptors"/>
</dbReference>
<dbReference type="BioGRID-ORCS" id="283162">
    <property type="hits" value="13 hits in 734 CRISPR screens"/>
</dbReference>
<dbReference type="GeneWiki" id="OR8B4"/>
<dbReference type="GenomeRNAi" id="283162"/>
<dbReference type="Pharos" id="Q96RC9">
    <property type="development level" value="Tdark"/>
</dbReference>
<dbReference type="PRO" id="PR:Q96RC9"/>
<dbReference type="Proteomes" id="UP000005640">
    <property type="component" value="Chromosome 11"/>
</dbReference>
<dbReference type="RNAct" id="Q96RC9">
    <property type="molecule type" value="protein"/>
</dbReference>
<dbReference type="Bgee" id="ENSG00000280090">
    <property type="expression patterns" value="Expressed in male germ line stem cell (sensu Vertebrata) in testis"/>
</dbReference>
<dbReference type="GO" id="GO:0005886">
    <property type="term" value="C:plasma membrane"/>
    <property type="evidence" value="ECO:0007669"/>
    <property type="project" value="UniProtKB-SubCell"/>
</dbReference>
<dbReference type="GO" id="GO:0004930">
    <property type="term" value="F:G protein-coupled receptor activity"/>
    <property type="evidence" value="ECO:0007669"/>
    <property type="project" value="UniProtKB-KW"/>
</dbReference>
<dbReference type="GO" id="GO:0005549">
    <property type="term" value="F:odorant binding"/>
    <property type="evidence" value="ECO:0000318"/>
    <property type="project" value="GO_Central"/>
</dbReference>
<dbReference type="GO" id="GO:0004984">
    <property type="term" value="F:olfactory receptor activity"/>
    <property type="evidence" value="ECO:0000318"/>
    <property type="project" value="GO_Central"/>
</dbReference>
<dbReference type="GO" id="GO:0007186">
    <property type="term" value="P:G protein-coupled receptor signaling pathway"/>
    <property type="evidence" value="ECO:0000318"/>
    <property type="project" value="GO_Central"/>
</dbReference>
<dbReference type="GO" id="GO:0007608">
    <property type="term" value="P:sensory perception of smell"/>
    <property type="evidence" value="ECO:0000318"/>
    <property type="project" value="GO_Central"/>
</dbReference>
<dbReference type="CDD" id="cd15405">
    <property type="entry name" value="7tmA_OR8B-like"/>
    <property type="match status" value="1"/>
</dbReference>
<dbReference type="FunFam" id="1.20.1070.10:FF:000004">
    <property type="entry name" value="Olfactory receptor"/>
    <property type="match status" value="1"/>
</dbReference>
<dbReference type="Gene3D" id="1.20.1070.10">
    <property type="entry name" value="Rhodopsin 7-helix transmembrane proteins"/>
    <property type="match status" value="1"/>
</dbReference>
<dbReference type="InterPro" id="IPR000276">
    <property type="entry name" value="GPCR_Rhodpsn"/>
</dbReference>
<dbReference type="InterPro" id="IPR017452">
    <property type="entry name" value="GPCR_Rhodpsn_7TM"/>
</dbReference>
<dbReference type="InterPro" id="IPR000725">
    <property type="entry name" value="Olfact_rcpt"/>
</dbReference>
<dbReference type="PANTHER" id="PTHR48018">
    <property type="entry name" value="OLFACTORY RECEPTOR"/>
    <property type="match status" value="1"/>
</dbReference>
<dbReference type="Pfam" id="PF13853">
    <property type="entry name" value="7tm_4"/>
    <property type="match status" value="1"/>
</dbReference>
<dbReference type="PRINTS" id="PR00237">
    <property type="entry name" value="GPCRRHODOPSN"/>
</dbReference>
<dbReference type="PRINTS" id="PR00245">
    <property type="entry name" value="OLFACTORYR"/>
</dbReference>
<dbReference type="SUPFAM" id="SSF81321">
    <property type="entry name" value="Family A G protein-coupled receptor-like"/>
    <property type="match status" value="1"/>
</dbReference>
<dbReference type="PROSITE" id="PS00237">
    <property type="entry name" value="G_PROTEIN_RECEP_F1_1"/>
    <property type="match status" value="1"/>
</dbReference>
<dbReference type="PROSITE" id="PS50262">
    <property type="entry name" value="G_PROTEIN_RECEP_F1_2"/>
    <property type="match status" value="1"/>
</dbReference>
<protein>
    <recommendedName>
        <fullName>Olfactory receptor 8B4</fullName>
    </recommendedName>
    <alternativeName>
        <fullName>Olfactory receptor OR11-315</fullName>
    </alternativeName>
</protein>
<accession>Q96RC9</accession>
<accession>B2RNF8</accession>
<accession>Q6IFQ7</accession>
<reference key="1">
    <citation type="submission" date="2001-07" db="EMBL/GenBank/DDBJ databases">
        <title>Genome-wide discovery and analysis of human seven transmembrane helix receptor genes.</title>
        <authorList>
            <person name="Suwa M."/>
            <person name="Sato T."/>
            <person name="Okouchi I."/>
            <person name="Arita M."/>
            <person name="Futami K."/>
            <person name="Matsumoto S."/>
            <person name="Tsutsumi S."/>
            <person name="Aburatani H."/>
            <person name="Asai K."/>
            <person name="Akiyama Y."/>
        </authorList>
    </citation>
    <scope>NUCLEOTIDE SEQUENCE [GENOMIC DNA]</scope>
</reference>
<reference key="2">
    <citation type="submission" date="2005-07" db="EMBL/GenBank/DDBJ databases">
        <authorList>
            <person name="Mural R.J."/>
            <person name="Istrail S."/>
            <person name="Sutton G.G."/>
            <person name="Florea L."/>
            <person name="Halpern A.L."/>
            <person name="Mobarry C.M."/>
            <person name="Lippert R."/>
            <person name="Walenz B."/>
            <person name="Shatkay H."/>
            <person name="Dew I."/>
            <person name="Miller J.R."/>
            <person name="Flanigan M.J."/>
            <person name="Edwards N.J."/>
            <person name="Bolanos R."/>
            <person name="Fasulo D."/>
            <person name="Halldorsson B.V."/>
            <person name="Hannenhalli S."/>
            <person name="Turner R."/>
            <person name="Yooseph S."/>
            <person name="Lu F."/>
            <person name="Nusskern D.R."/>
            <person name="Shue B.C."/>
            <person name="Zheng X.H."/>
            <person name="Zhong F."/>
            <person name="Delcher A.L."/>
            <person name="Huson D.H."/>
            <person name="Kravitz S.A."/>
            <person name="Mouchard L."/>
            <person name="Reinert K."/>
            <person name="Remington K.A."/>
            <person name="Clark A.G."/>
            <person name="Waterman M.S."/>
            <person name="Eichler E.E."/>
            <person name="Adams M.D."/>
            <person name="Hunkapiller M.W."/>
            <person name="Myers E.W."/>
            <person name="Venter J.C."/>
        </authorList>
    </citation>
    <scope>NUCLEOTIDE SEQUENCE [LARGE SCALE GENOMIC DNA]</scope>
</reference>
<reference key="3">
    <citation type="journal article" date="2004" name="Genome Res.">
        <title>The status, quality, and expansion of the NIH full-length cDNA project: the Mammalian Gene Collection (MGC).</title>
        <authorList>
            <consortium name="The MGC Project Team"/>
        </authorList>
    </citation>
    <scope>NUCLEOTIDE SEQUENCE [LARGE SCALE MRNA]</scope>
    <scope>VARIANTS HIS-131; PHE-140 AND ARG-178</scope>
</reference>
<reference key="4">
    <citation type="journal article" date="2002" name="Genomics">
        <title>DEFOG: a practical scheme for deciphering families of genes.</title>
        <authorList>
            <person name="Fuchs T."/>
            <person name="Malecova B."/>
            <person name="Linhart C."/>
            <person name="Sharan R."/>
            <person name="Khen M."/>
            <person name="Herwig R."/>
            <person name="Shmulevich D."/>
            <person name="Elkon R."/>
            <person name="Steinfath M."/>
            <person name="O'Brien J.K."/>
            <person name="Radelof U."/>
            <person name="Lehrach H."/>
            <person name="Lancet D."/>
            <person name="Shamir R."/>
        </authorList>
    </citation>
    <scope>NUCLEOTIDE SEQUENCE [GENOMIC DNA] OF 68-282</scope>
</reference>
<reference key="5">
    <citation type="journal article" date="2004" name="Proc. Natl. Acad. Sci. U.S.A.">
        <title>The human olfactory receptor gene family.</title>
        <authorList>
            <person name="Malnic B."/>
            <person name="Godfrey P.A."/>
            <person name="Buck L.B."/>
        </authorList>
    </citation>
    <scope>IDENTIFICATION</scope>
</reference>
<reference key="6">
    <citation type="journal article" date="2004" name="Proc. Natl. Acad. Sci. U.S.A.">
        <authorList>
            <person name="Malnic B."/>
            <person name="Godfrey P.A."/>
            <person name="Buck L.B."/>
        </authorList>
    </citation>
    <scope>ERRATUM OF PUBMED:14983052</scope>
</reference>
<evidence type="ECO:0000255" key="1"/>
<evidence type="ECO:0000255" key="2">
    <source>
        <dbReference type="PROSITE-ProRule" id="PRU00521"/>
    </source>
</evidence>
<evidence type="ECO:0000269" key="3">
    <source>
    </source>
</evidence>
<evidence type="ECO:0000305" key="4"/>
<feature type="chain" id="PRO_0000150656" description="Olfactory receptor 8B4">
    <location>
        <begin position="1"/>
        <end position="309"/>
    </location>
</feature>
<feature type="topological domain" description="Extracellular" evidence="1">
    <location>
        <begin position="1"/>
        <end position="25"/>
    </location>
</feature>
<feature type="transmembrane region" description="Helical; Name=1" evidence="1">
    <location>
        <begin position="26"/>
        <end position="46"/>
    </location>
</feature>
<feature type="topological domain" description="Cytoplasmic" evidence="1">
    <location>
        <begin position="47"/>
        <end position="54"/>
    </location>
</feature>
<feature type="transmembrane region" description="Helical; Name=2" evidence="1">
    <location>
        <begin position="55"/>
        <end position="75"/>
    </location>
</feature>
<feature type="topological domain" description="Extracellular" evidence="1">
    <location>
        <begin position="76"/>
        <end position="98"/>
    </location>
</feature>
<feature type="transmembrane region" description="Helical; Name=3" evidence="1">
    <location>
        <begin position="99"/>
        <end position="119"/>
    </location>
</feature>
<feature type="topological domain" description="Cytoplasmic" evidence="1">
    <location>
        <begin position="120"/>
        <end position="138"/>
    </location>
</feature>
<feature type="transmembrane region" description="Helical; Name=4" evidence="1">
    <location>
        <begin position="139"/>
        <end position="159"/>
    </location>
</feature>
<feature type="topological domain" description="Extracellular" evidence="1">
    <location>
        <begin position="160"/>
        <end position="196"/>
    </location>
</feature>
<feature type="transmembrane region" description="Helical; Name=5" evidence="1">
    <location>
        <begin position="197"/>
        <end position="216"/>
    </location>
</feature>
<feature type="topological domain" description="Cytoplasmic" evidence="1">
    <location>
        <begin position="217"/>
        <end position="236"/>
    </location>
</feature>
<feature type="transmembrane region" description="Helical; Name=6" evidence="1">
    <location>
        <begin position="237"/>
        <end position="257"/>
    </location>
</feature>
<feature type="topological domain" description="Extracellular" evidence="1">
    <location>
        <begin position="258"/>
        <end position="270"/>
    </location>
</feature>
<feature type="transmembrane region" description="Helical; Name=7" evidence="1">
    <location>
        <begin position="271"/>
        <end position="291"/>
    </location>
</feature>
<feature type="topological domain" description="Cytoplasmic" evidence="1">
    <location>
        <begin position="292"/>
        <end position="309"/>
    </location>
</feature>
<feature type="glycosylation site" description="N-linked (GlcNAc...) asparagine" evidence="1">
    <location>
        <position position="5"/>
    </location>
</feature>
<feature type="disulfide bond" evidence="2">
    <location>
        <begin position="96"/>
        <end position="188"/>
    </location>
</feature>
<feature type="sequence variant" id="VAR_053239" description="In dbSNP:rs10750270.">
    <original>E</original>
    <variation>G</variation>
    <location>
        <position position="22"/>
    </location>
</feature>
<feature type="sequence variant" id="VAR_024115" description="In dbSNP:rs4057750." evidence="3">
    <original>Y</original>
    <variation>H</variation>
    <location>
        <position position="131"/>
    </location>
</feature>
<feature type="sequence variant" id="VAR_053240" description="In dbSNP:rs7116575." evidence="3">
    <original>C</original>
    <variation>F</variation>
    <location>
        <position position="140"/>
    </location>
</feature>
<feature type="sequence variant" id="VAR_053241" description="In dbSNP:rs4057749." evidence="3">
    <original>C</original>
    <variation>R</variation>
    <location>
        <position position="178"/>
    </location>
</feature>
<keyword id="KW-1003">Cell membrane</keyword>
<keyword id="KW-1015">Disulfide bond</keyword>
<keyword id="KW-0297">G-protein coupled receptor</keyword>
<keyword id="KW-0325">Glycoprotein</keyword>
<keyword id="KW-0472">Membrane</keyword>
<keyword id="KW-0552">Olfaction</keyword>
<keyword id="KW-0675">Receptor</keyword>
<keyword id="KW-1185">Reference proteome</keyword>
<keyword id="KW-0716">Sensory transduction</keyword>
<keyword id="KW-0807">Transducer</keyword>
<keyword id="KW-0812">Transmembrane</keyword>
<keyword id="KW-1133">Transmembrane helix</keyword>
<proteinExistence type="evidence at transcript level"/>